<comment type="catalytic activity">
    <reaction evidence="1">
        <text>1-(5-phospho-beta-D-ribosyl)-ATP + H2O = 1-(5-phospho-beta-D-ribosyl)-5'-AMP + diphosphate + H(+)</text>
        <dbReference type="Rhea" id="RHEA:22828"/>
        <dbReference type="ChEBI" id="CHEBI:15377"/>
        <dbReference type="ChEBI" id="CHEBI:15378"/>
        <dbReference type="ChEBI" id="CHEBI:33019"/>
        <dbReference type="ChEBI" id="CHEBI:59457"/>
        <dbReference type="ChEBI" id="CHEBI:73183"/>
        <dbReference type="EC" id="3.6.1.31"/>
    </reaction>
</comment>
<comment type="pathway">
    <text evidence="1">Amino-acid biosynthesis; L-histidine biosynthesis; L-histidine from 5-phospho-alpha-D-ribose 1-diphosphate: step 2/9.</text>
</comment>
<comment type="subcellular location">
    <subcellularLocation>
        <location evidence="1">Cytoplasm</location>
    </subcellularLocation>
</comment>
<comment type="similarity">
    <text evidence="1">Belongs to the PRA-PH family.</text>
</comment>
<evidence type="ECO:0000255" key="1">
    <source>
        <dbReference type="HAMAP-Rule" id="MF_01020"/>
    </source>
</evidence>
<keyword id="KW-0028">Amino-acid biosynthesis</keyword>
<keyword id="KW-0067">ATP-binding</keyword>
<keyword id="KW-0963">Cytoplasm</keyword>
<keyword id="KW-0368">Histidine biosynthesis</keyword>
<keyword id="KW-0378">Hydrolase</keyword>
<keyword id="KW-0547">Nucleotide-binding</keyword>
<dbReference type="EC" id="3.6.1.31" evidence="1"/>
<dbReference type="EMBL" id="CP000076">
    <property type="protein sequence ID" value="AAY95832.1"/>
    <property type="molecule type" value="Genomic_DNA"/>
</dbReference>
<dbReference type="RefSeq" id="WP_011058798.1">
    <property type="nucleotide sequence ID" value="NC_004129.6"/>
</dbReference>
<dbReference type="SMR" id="Q4KJL6"/>
<dbReference type="STRING" id="220664.PFL_0423"/>
<dbReference type="KEGG" id="pfl:PFL_0423"/>
<dbReference type="PATRIC" id="fig|220664.5.peg.432"/>
<dbReference type="eggNOG" id="COG0140">
    <property type="taxonomic scope" value="Bacteria"/>
</dbReference>
<dbReference type="HOGENOM" id="CLU_123337_1_2_6"/>
<dbReference type="UniPathway" id="UPA00031">
    <property type="reaction ID" value="UER00007"/>
</dbReference>
<dbReference type="Proteomes" id="UP000008540">
    <property type="component" value="Chromosome"/>
</dbReference>
<dbReference type="GO" id="GO:0005737">
    <property type="term" value="C:cytoplasm"/>
    <property type="evidence" value="ECO:0007669"/>
    <property type="project" value="UniProtKB-SubCell"/>
</dbReference>
<dbReference type="GO" id="GO:0005524">
    <property type="term" value="F:ATP binding"/>
    <property type="evidence" value="ECO:0007669"/>
    <property type="project" value="UniProtKB-KW"/>
</dbReference>
<dbReference type="GO" id="GO:0004636">
    <property type="term" value="F:phosphoribosyl-ATP diphosphatase activity"/>
    <property type="evidence" value="ECO:0007669"/>
    <property type="project" value="UniProtKB-UniRule"/>
</dbReference>
<dbReference type="GO" id="GO:0000105">
    <property type="term" value="P:L-histidine biosynthetic process"/>
    <property type="evidence" value="ECO:0007669"/>
    <property type="project" value="UniProtKB-UniRule"/>
</dbReference>
<dbReference type="CDD" id="cd11534">
    <property type="entry name" value="NTP-PPase_HisIE_like"/>
    <property type="match status" value="1"/>
</dbReference>
<dbReference type="Gene3D" id="1.10.287.1080">
    <property type="entry name" value="MazG-like"/>
    <property type="match status" value="1"/>
</dbReference>
<dbReference type="HAMAP" id="MF_01020">
    <property type="entry name" value="HisE"/>
    <property type="match status" value="1"/>
</dbReference>
<dbReference type="InterPro" id="IPR008179">
    <property type="entry name" value="HisE"/>
</dbReference>
<dbReference type="InterPro" id="IPR021130">
    <property type="entry name" value="PRib-ATP_PPHydrolase-like"/>
</dbReference>
<dbReference type="NCBIfam" id="TIGR03188">
    <property type="entry name" value="histidine_hisI"/>
    <property type="match status" value="1"/>
</dbReference>
<dbReference type="NCBIfam" id="NF001611">
    <property type="entry name" value="PRK00400.1-3"/>
    <property type="match status" value="1"/>
</dbReference>
<dbReference type="PANTHER" id="PTHR42945">
    <property type="entry name" value="HISTIDINE BIOSYNTHESIS BIFUNCTIONAL PROTEIN"/>
    <property type="match status" value="1"/>
</dbReference>
<dbReference type="PANTHER" id="PTHR42945:SF9">
    <property type="entry name" value="HISTIDINE BIOSYNTHESIS BIFUNCTIONAL PROTEIN HISIE"/>
    <property type="match status" value="1"/>
</dbReference>
<dbReference type="Pfam" id="PF01503">
    <property type="entry name" value="PRA-PH"/>
    <property type="match status" value="1"/>
</dbReference>
<dbReference type="SUPFAM" id="SSF101386">
    <property type="entry name" value="all-alpha NTP pyrophosphatases"/>
    <property type="match status" value="1"/>
</dbReference>
<name>HIS2_PSEF5</name>
<accession>Q4KJL6</accession>
<gene>
    <name evidence="1" type="primary">hisE</name>
    <name type="ordered locus">PFL_0423</name>
</gene>
<organism>
    <name type="scientific">Pseudomonas fluorescens (strain ATCC BAA-477 / NRRL B-23932 / Pf-5)</name>
    <dbReference type="NCBI Taxonomy" id="220664"/>
    <lineage>
        <taxon>Bacteria</taxon>
        <taxon>Pseudomonadati</taxon>
        <taxon>Pseudomonadota</taxon>
        <taxon>Gammaproteobacteria</taxon>
        <taxon>Pseudomonadales</taxon>
        <taxon>Pseudomonadaceae</taxon>
        <taxon>Pseudomonas</taxon>
    </lineage>
</organism>
<feature type="chain" id="PRO_0000230185" description="Phosphoribosyl-ATP pyrophosphatase">
    <location>
        <begin position="1"/>
        <end position="110"/>
    </location>
</feature>
<proteinExistence type="inferred from homology"/>
<sequence>MSDTLTRLAQVLEERKDAAADSSYVASLYHKGLNKILEKVGEESVETIIAAKDAAISGDCSDVIYETADLWFHTLVMLAQLGQHPQAVLDELDRRFGLSGHAEKASRPSA</sequence>
<reference key="1">
    <citation type="journal article" date="2005" name="Nat. Biotechnol.">
        <title>Complete genome sequence of the plant commensal Pseudomonas fluorescens Pf-5.</title>
        <authorList>
            <person name="Paulsen I.T."/>
            <person name="Press C.M."/>
            <person name="Ravel J."/>
            <person name="Kobayashi D.Y."/>
            <person name="Myers G.S.A."/>
            <person name="Mavrodi D.V."/>
            <person name="DeBoy R.T."/>
            <person name="Seshadri R."/>
            <person name="Ren Q."/>
            <person name="Madupu R."/>
            <person name="Dodson R.J."/>
            <person name="Durkin A.S."/>
            <person name="Brinkac L.M."/>
            <person name="Daugherty S.C."/>
            <person name="Sullivan S.A."/>
            <person name="Rosovitz M.J."/>
            <person name="Gwinn M.L."/>
            <person name="Zhou L."/>
            <person name="Schneider D.J."/>
            <person name="Cartinhour S.W."/>
            <person name="Nelson W.C."/>
            <person name="Weidman J."/>
            <person name="Watkins K."/>
            <person name="Tran K."/>
            <person name="Khouri H."/>
            <person name="Pierson E.A."/>
            <person name="Pierson L.S. III"/>
            <person name="Thomashow L.S."/>
            <person name="Loper J.E."/>
        </authorList>
    </citation>
    <scope>NUCLEOTIDE SEQUENCE [LARGE SCALE GENOMIC DNA]</scope>
    <source>
        <strain>ATCC BAA-477 / NRRL B-23932 / Pf-5</strain>
    </source>
</reference>
<protein>
    <recommendedName>
        <fullName evidence="1">Phosphoribosyl-ATP pyrophosphatase</fullName>
        <shortName evidence="1">PRA-PH</shortName>
        <ecNumber evidence="1">3.6.1.31</ecNumber>
    </recommendedName>
</protein>